<name>LOLD_PORGI</name>
<proteinExistence type="inferred from homology"/>
<dbReference type="EC" id="7.6.2.-" evidence="1"/>
<dbReference type="EMBL" id="AE015924">
    <property type="protein sequence ID" value="AAQ66706.1"/>
    <property type="molecule type" value="Genomic_DNA"/>
</dbReference>
<dbReference type="SMR" id="Q7MU65"/>
<dbReference type="STRING" id="242619.PG_1692"/>
<dbReference type="EnsemblBacteria" id="AAQ66706">
    <property type="protein sequence ID" value="AAQ66706"/>
    <property type="gene ID" value="PG_1692"/>
</dbReference>
<dbReference type="KEGG" id="pgi:PG_1692"/>
<dbReference type="eggNOG" id="COG1136">
    <property type="taxonomic scope" value="Bacteria"/>
</dbReference>
<dbReference type="HOGENOM" id="CLU_000604_1_22_10"/>
<dbReference type="Proteomes" id="UP000000588">
    <property type="component" value="Chromosome"/>
</dbReference>
<dbReference type="GO" id="GO:0005886">
    <property type="term" value="C:plasma membrane"/>
    <property type="evidence" value="ECO:0007669"/>
    <property type="project" value="UniProtKB-SubCell"/>
</dbReference>
<dbReference type="GO" id="GO:0005524">
    <property type="term" value="F:ATP binding"/>
    <property type="evidence" value="ECO:0007669"/>
    <property type="project" value="UniProtKB-KW"/>
</dbReference>
<dbReference type="GO" id="GO:0016887">
    <property type="term" value="F:ATP hydrolysis activity"/>
    <property type="evidence" value="ECO:0007669"/>
    <property type="project" value="InterPro"/>
</dbReference>
<dbReference type="CDD" id="cd03255">
    <property type="entry name" value="ABC_MJ0796_LolCDE_FtsE"/>
    <property type="match status" value="1"/>
</dbReference>
<dbReference type="FunFam" id="3.40.50.300:FF:000230">
    <property type="entry name" value="Lipoprotein-releasing system ATP-binding protein LolD"/>
    <property type="match status" value="1"/>
</dbReference>
<dbReference type="Gene3D" id="3.40.50.300">
    <property type="entry name" value="P-loop containing nucleotide triphosphate hydrolases"/>
    <property type="match status" value="1"/>
</dbReference>
<dbReference type="InterPro" id="IPR003593">
    <property type="entry name" value="AAA+_ATPase"/>
</dbReference>
<dbReference type="InterPro" id="IPR003439">
    <property type="entry name" value="ABC_transporter-like_ATP-bd"/>
</dbReference>
<dbReference type="InterPro" id="IPR017871">
    <property type="entry name" value="ABC_transporter-like_CS"/>
</dbReference>
<dbReference type="InterPro" id="IPR017911">
    <property type="entry name" value="MacB-like_ATP-bd"/>
</dbReference>
<dbReference type="InterPro" id="IPR027417">
    <property type="entry name" value="P-loop_NTPase"/>
</dbReference>
<dbReference type="PANTHER" id="PTHR42798:SF7">
    <property type="entry name" value="ALPHA-D-RIBOSE 1-METHYLPHOSPHONATE 5-TRIPHOSPHATE SYNTHASE SUBUNIT PHNL"/>
    <property type="match status" value="1"/>
</dbReference>
<dbReference type="PANTHER" id="PTHR42798">
    <property type="entry name" value="LIPOPROTEIN-RELEASING SYSTEM ATP-BINDING PROTEIN LOLD"/>
    <property type="match status" value="1"/>
</dbReference>
<dbReference type="Pfam" id="PF00005">
    <property type="entry name" value="ABC_tran"/>
    <property type="match status" value="1"/>
</dbReference>
<dbReference type="SMART" id="SM00382">
    <property type="entry name" value="AAA"/>
    <property type="match status" value="1"/>
</dbReference>
<dbReference type="SUPFAM" id="SSF52540">
    <property type="entry name" value="P-loop containing nucleoside triphosphate hydrolases"/>
    <property type="match status" value="1"/>
</dbReference>
<dbReference type="PROSITE" id="PS00211">
    <property type="entry name" value="ABC_TRANSPORTER_1"/>
    <property type="match status" value="1"/>
</dbReference>
<dbReference type="PROSITE" id="PS50893">
    <property type="entry name" value="ABC_TRANSPORTER_2"/>
    <property type="match status" value="1"/>
</dbReference>
<dbReference type="PROSITE" id="PS51244">
    <property type="entry name" value="LOLD"/>
    <property type="match status" value="1"/>
</dbReference>
<sequence length="219" mass="24188">MIIEARNIRKSFGSLEVLKGVDIAIDRGEIVSIVGTSGAGKTTLLQILGTLDRADSGELRIDGTDIMGMNNRKQAEFRNRRLGFIFQFHRLLPEFTALENVMIPALIAGKSRKEASCEAERLLSDLNLSDRASHKPSELSGGEKQRIAVARALVNHPAIILADEPSGSLDSAHKEELHALFFRLCREMGQTFLIVTHDEKLAAGTDRILHMRDGLLFSE</sequence>
<feature type="chain" id="PRO_0000092447" description="Lipoprotein-releasing system ATP-binding protein LolD">
    <location>
        <begin position="1"/>
        <end position="219"/>
    </location>
</feature>
<feature type="domain" description="ABC transporter" evidence="1">
    <location>
        <begin position="3"/>
        <end position="219"/>
    </location>
</feature>
<feature type="binding site" evidence="1">
    <location>
        <begin position="35"/>
        <end position="42"/>
    </location>
    <ligand>
        <name>ATP</name>
        <dbReference type="ChEBI" id="CHEBI:30616"/>
    </ligand>
</feature>
<organism>
    <name type="scientific">Porphyromonas gingivalis (strain ATCC BAA-308 / W83)</name>
    <dbReference type="NCBI Taxonomy" id="242619"/>
    <lineage>
        <taxon>Bacteria</taxon>
        <taxon>Pseudomonadati</taxon>
        <taxon>Bacteroidota</taxon>
        <taxon>Bacteroidia</taxon>
        <taxon>Bacteroidales</taxon>
        <taxon>Porphyromonadaceae</taxon>
        <taxon>Porphyromonas</taxon>
    </lineage>
</organism>
<comment type="function">
    <text evidence="1">Part of the ABC transporter complex LolCDE involved in the translocation of mature outer membrane-directed lipoproteins, from the inner membrane to the periplasmic chaperone, LolA. Responsible for the formation of the LolA-lipoprotein complex in an ATP-dependent manner.</text>
</comment>
<comment type="subunit">
    <text evidence="1">The complex is composed of two ATP-binding proteins (LolD) and two transmembrane proteins (LolC and LolE).</text>
</comment>
<comment type="subcellular location">
    <subcellularLocation>
        <location evidence="1">Cell inner membrane</location>
        <topology evidence="1">Peripheral membrane protein</topology>
    </subcellularLocation>
</comment>
<comment type="similarity">
    <text evidence="1">Belongs to the ABC transporter superfamily. Lipoprotein translocase (TC 3.A.1.125) family.</text>
</comment>
<keyword id="KW-0067">ATP-binding</keyword>
<keyword id="KW-0997">Cell inner membrane</keyword>
<keyword id="KW-1003">Cell membrane</keyword>
<keyword id="KW-0472">Membrane</keyword>
<keyword id="KW-0547">Nucleotide-binding</keyword>
<keyword id="KW-1185">Reference proteome</keyword>
<keyword id="KW-1278">Translocase</keyword>
<keyword id="KW-0813">Transport</keyword>
<gene>
    <name evidence="1" type="primary">lolD</name>
    <name type="ordered locus">PG_1692</name>
</gene>
<evidence type="ECO:0000255" key="1">
    <source>
        <dbReference type="HAMAP-Rule" id="MF_01708"/>
    </source>
</evidence>
<reference key="1">
    <citation type="journal article" date="2003" name="J. Bacteriol.">
        <title>Complete genome sequence of the oral pathogenic bacterium Porphyromonas gingivalis strain W83.</title>
        <authorList>
            <person name="Nelson K.E."/>
            <person name="Fleischmann R.D."/>
            <person name="DeBoy R.T."/>
            <person name="Paulsen I.T."/>
            <person name="Fouts D.E."/>
            <person name="Eisen J.A."/>
            <person name="Daugherty S.C."/>
            <person name="Dodson R.J."/>
            <person name="Durkin A.S."/>
            <person name="Gwinn M.L."/>
            <person name="Haft D.H."/>
            <person name="Kolonay J.F."/>
            <person name="Nelson W.C."/>
            <person name="Mason T.M."/>
            <person name="Tallon L."/>
            <person name="Gray J."/>
            <person name="Granger D."/>
            <person name="Tettelin H."/>
            <person name="Dong H."/>
            <person name="Galvin J.L."/>
            <person name="Duncan M.J."/>
            <person name="Dewhirst F.E."/>
            <person name="Fraser C.M."/>
        </authorList>
    </citation>
    <scope>NUCLEOTIDE SEQUENCE [LARGE SCALE GENOMIC DNA]</scope>
    <source>
        <strain>ATCC BAA-308 / W83</strain>
    </source>
</reference>
<accession>Q7MU65</accession>
<protein>
    <recommendedName>
        <fullName evidence="1">Lipoprotein-releasing system ATP-binding protein LolD</fullName>
        <ecNumber evidence="1">7.6.2.-</ecNumber>
    </recommendedName>
</protein>